<protein>
    <recommendedName>
        <fullName evidence="1">DNA-directed RNA polymerase subunit omega</fullName>
        <shortName evidence="1">RNAP omega subunit</shortName>
        <ecNumber evidence="1">2.7.7.6</ecNumber>
    </recommendedName>
    <alternativeName>
        <fullName evidence="1">RNA polymerase omega subunit</fullName>
    </alternativeName>
    <alternativeName>
        <fullName evidence="1">Transcriptase subunit omega</fullName>
    </alternativeName>
</protein>
<dbReference type="EC" id="2.7.7.6" evidence="1"/>
<dbReference type="EMBL" id="CP000393">
    <property type="protein sequence ID" value="ABG52536.1"/>
    <property type="molecule type" value="Genomic_DNA"/>
</dbReference>
<dbReference type="RefSeq" id="WP_011612879.1">
    <property type="nucleotide sequence ID" value="NC_008312.1"/>
</dbReference>
<dbReference type="SMR" id="Q10YY8"/>
<dbReference type="STRING" id="203124.Tery_3443"/>
<dbReference type="KEGG" id="ter:Tery_3443"/>
<dbReference type="eggNOG" id="ENOG5032RMS">
    <property type="taxonomic scope" value="Bacteria"/>
</dbReference>
<dbReference type="HOGENOM" id="CLU_175526_0_0_3"/>
<dbReference type="OrthoDB" id="463386at2"/>
<dbReference type="GO" id="GO:0000428">
    <property type="term" value="C:DNA-directed RNA polymerase complex"/>
    <property type="evidence" value="ECO:0007669"/>
    <property type="project" value="UniProtKB-KW"/>
</dbReference>
<dbReference type="GO" id="GO:0003677">
    <property type="term" value="F:DNA binding"/>
    <property type="evidence" value="ECO:0007669"/>
    <property type="project" value="UniProtKB-UniRule"/>
</dbReference>
<dbReference type="GO" id="GO:0003899">
    <property type="term" value="F:DNA-directed RNA polymerase activity"/>
    <property type="evidence" value="ECO:0007669"/>
    <property type="project" value="UniProtKB-UniRule"/>
</dbReference>
<dbReference type="GO" id="GO:0006351">
    <property type="term" value="P:DNA-templated transcription"/>
    <property type="evidence" value="ECO:0007669"/>
    <property type="project" value="UniProtKB-UniRule"/>
</dbReference>
<dbReference type="HAMAP" id="MF_00366">
    <property type="entry name" value="RNApol_bact_RpoZ"/>
    <property type="match status" value="1"/>
</dbReference>
<dbReference type="InterPro" id="IPR003716">
    <property type="entry name" value="DNA-dir_RNA_pol_omega"/>
</dbReference>
<dbReference type="InterPro" id="IPR006110">
    <property type="entry name" value="Pol_omega/Rpo6/RPB6"/>
</dbReference>
<dbReference type="InterPro" id="IPR036161">
    <property type="entry name" value="RPB6/omega-like_sf"/>
</dbReference>
<dbReference type="NCBIfam" id="NF001574">
    <property type="entry name" value="PRK00392.2-5"/>
    <property type="match status" value="1"/>
</dbReference>
<dbReference type="Pfam" id="PF01192">
    <property type="entry name" value="RNA_pol_Rpb6"/>
    <property type="match status" value="1"/>
</dbReference>
<dbReference type="SUPFAM" id="SSF63562">
    <property type="entry name" value="RPB6/omega subunit-like"/>
    <property type="match status" value="1"/>
</dbReference>
<name>RPOZ_TRIEI</name>
<keyword id="KW-0240">DNA-directed RNA polymerase</keyword>
<keyword id="KW-0548">Nucleotidyltransferase</keyword>
<keyword id="KW-0804">Transcription</keyword>
<keyword id="KW-0808">Transferase</keyword>
<reference key="1">
    <citation type="journal article" date="2015" name="Proc. Natl. Acad. Sci. U.S.A.">
        <title>Trichodesmium genome maintains abundant, widespread noncoding DNA in situ, despite oligotrophic lifestyle.</title>
        <authorList>
            <person name="Walworth N."/>
            <person name="Pfreundt U."/>
            <person name="Nelson W.C."/>
            <person name="Mincer T."/>
            <person name="Heidelberg J.F."/>
            <person name="Fu F."/>
            <person name="Waterbury J.B."/>
            <person name="Glavina del Rio T."/>
            <person name="Goodwin L."/>
            <person name="Kyrpides N.C."/>
            <person name="Land M.L."/>
            <person name="Woyke T."/>
            <person name="Hutchins D.A."/>
            <person name="Hess W.R."/>
            <person name="Webb E.A."/>
        </authorList>
    </citation>
    <scope>NUCLEOTIDE SEQUENCE [LARGE SCALE GENOMIC DNA]</scope>
    <source>
        <strain>IMS101</strain>
    </source>
</reference>
<comment type="function">
    <text evidence="1">Promotes RNA polymerase assembly. Latches the N- and C-terminal regions of the beta' subunit thereby facilitating its interaction with the beta and alpha subunits.</text>
</comment>
<comment type="catalytic activity">
    <reaction evidence="1">
        <text>RNA(n) + a ribonucleoside 5'-triphosphate = RNA(n+1) + diphosphate</text>
        <dbReference type="Rhea" id="RHEA:21248"/>
        <dbReference type="Rhea" id="RHEA-COMP:14527"/>
        <dbReference type="Rhea" id="RHEA-COMP:17342"/>
        <dbReference type="ChEBI" id="CHEBI:33019"/>
        <dbReference type="ChEBI" id="CHEBI:61557"/>
        <dbReference type="ChEBI" id="CHEBI:140395"/>
        <dbReference type="EC" id="2.7.7.6"/>
    </reaction>
</comment>
<comment type="subunit">
    <text evidence="1">In cyanobacteria the RNAP catalytic core is composed of 2 alpha, 1 beta, 1 beta', 1 gamma and 1 omega subunit. When a sigma factor is associated with the core the holoenzyme is formed, which can initiate transcription.</text>
</comment>
<comment type="similarity">
    <text evidence="1">Belongs to the RNA polymerase subunit omega family.</text>
</comment>
<evidence type="ECO:0000255" key="1">
    <source>
        <dbReference type="HAMAP-Rule" id="MF_00366"/>
    </source>
</evidence>
<proteinExistence type="inferred from homology"/>
<gene>
    <name evidence="1" type="primary">rpoZ</name>
    <name type="ordered locus">Tery_3443</name>
</gene>
<organism>
    <name type="scientific">Trichodesmium erythraeum (strain IMS101)</name>
    <dbReference type="NCBI Taxonomy" id="203124"/>
    <lineage>
        <taxon>Bacteria</taxon>
        <taxon>Bacillati</taxon>
        <taxon>Cyanobacteriota</taxon>
        <taxon>Cyanophyceae</taxon>
        <taxon>Oscillatoriophycideae</taxon>
        <taxon>Oscillatoriales</taxon>
        <taxon>Microcoleaceae</taxon>
        <taxon>Trichodesmium</taxon>
    </lineage>
</organism>
<accession>Q10YY8</accession>
<sequence length="82" mass="9555">MQKQSNINSVELSRKSEELIKASSNRYRAVVQVANRAKRRRYEDFDNFDEQAVKPVIRAVLEMSDELMQPEIISEVGNNIDR</sequence>
<feature type="chain" id="PRO_1000006035" description="DNA-directed RNA polymerase subunit omega">
    <location>
        <begin position="1"/>
        <end position="82"/>
    </location>
</feature>